<feature type="chain" id="PRO_0000164574" description="D-aminoacyl-tRNA deacylase">
    <location>
        <begin position="1"/>
        <end position="145"/>
    </location>
</feature>
<feature type="short sequence motif" description="Gly-cisPro motif, important for rejection of L-amino acids" evidence="1">
    <location>
        <begin position="137"/>
        <end position="138"/>
    </location>
</feature>
<name>DTD_PSEAE</name>
<reference key="1">
    <citation type="journal article" date="2000" name="Nature">
        <title>Complete genome sequence of Pseudomonas aeruginosa PAO1, an opportunistic pathogen.</title>
        <authorList>
            <person name="Stover C.K."/>
            <person name="Pham X.-Q.T."/>
            <person name="Erwin A.L."/>
            <person name="Mizoguchi S.D."/>
            <person name="Warrener P."/>
            <person name="Hickey M.J."/>
            <person name="Brinkman F.S.L."/>
            <person name="Hufnagle W.O."/>
            <person name="Kowalik D.J."/>
            <person name="Lagrou M."/>
            <person name="Garber R.L."/>
            <person name="Goltry L."/>
            <person name="Tolentino E."/>
            <person name="Westbrock-Wadman S."/>
            <person name="Yuan Y."/>
            <person name="Brody L.L."/>
            <person name="Coulter S.N."/>
            <person name="Folger K.R."/>
            <person name="Kas A."/>
            <person name="Larbig K."/>
            <person name="Lim R.M."/>
            <person name="Smith K.A."/>
            <person name="Spencer D.H."/>
            <person name="Wong G.K.-S."/>
            <person name="Wu Z."/>
            <person name="Paulsen I.T."/>
            <person name="Reizer J."/>
            <person name="Saier M.H. Jr."/>
            <person name="Hancock R.E.W."/>
            <person name="Lory S."/>
            <person name="Olson M.V."/>
        </authorList>
    </citation>
    <scope>NUCLEOTIDE SEQUENCE [LARGE SCALE GENOMIC DNA]</scope>
    <source>
        <strain>ATCC 15692 / DSM 22644 / CIP 104116 / JCM 14847 / LMG 12228 / 1C / PRS 101 / PAO1</strain>
    </source>
</reference>
<sequence>MKALLQRVGAARVEVGGEIVGSIDRGLLVLVGVEPEDGERCAAKMLHKLLNYRVFGDDEGKMNRSLLDVQGGLLLVSQFTLAANTRSGLRPSFSSAAPPAQGEAVFEHLVKLAREAYPQVATGRFGADMQVHLVNDGPVTFLLES</sequence>
<comment type="function">
    <text evidence="1">An aminoacyl-tRNA editing enzyme that deacylates mischarged D-aminoacyl-tRNAs. Also deacylates mischarged glycyl-tRNA(Ala), protecting cells against glycine mischarging by AlaRS. Acts via tRNA-based rather than protein-based catalysis; rejects L-amino acids rather than detecting D-amino acids in the active site. By recycling D-aminoacyl-tRNA to D-amino acids and free tRNA molecules, this enzyme counteracts the toxicity associated with the formation of D-aminoacyl-tRNA entities in vivo and helps enforce protein L-homochirality.</text>
</comment>
<comment type="catalytic activity">
    <reaction evidence="1">
        <text>glycyl-tRNA(Ala) + H2O = tRNA(Ala) + glycine + H(+)</text>
        <dbReference type="Rhea" id="RHEA:53744"/>
        <dbReference type="Rhea" id="RHEA-COMP:9657"/>
        <dbReference type="Rhea" id="RHEA-COMP:13640"/>
        <dbReference type="ChEBI" id="CHEBI:15377"/>
        <dbReference type="ChEBI" id="CHEBI:15378"/>
        <dbReference type="ChEBI" id="CHEBI:57305"/>
        <dbReference type="ChEBI" id="CHEBI:78442"/>
        <dbReference type="ChEBI" id="CHEBI:78522"/>
        <dbReference type="EC" id="3.1.1.96"/>
    </reaction>
</comment>
<comment type="catalytic activity">
    <reaction evidence="1">
        <text>a D-aminoacyl-tRNA + H2O = a tRNA + a D-alpha-amino acid + H(+)</text>
        <dbReference type="Rhea" id="RHEA:13953"/>
        <dbReference type="Rhea" id="RHEA-COMP:10123"/>
        <dbReference type="Rhea" id="RHEA-COMP:10124"/>
        <dbReference type="ChEBI" id="CHEBI:15377"/>
        <dbReference type="ChEBI" id="CHEBI:15378"/>
        <dbReference type="ChEBI" id="CHEBI:59871"/>
        <dbReference type="ChEBI" id="CHEBI:78442"/>
        <dbReference type="ChEBI" id="CHEBI:79333"/>
        <dbReference type="EC" id="3.1.1.96"/>
    </reaction>
</comment>
<comment type="subunit">
    <text evidence="1">Homodimer.</text>
</comment>
<comment type="subcellular location">
    <subcellularLocation>
        <location evidence="1">Cytoplasm</location>
    </subcellularLocation>
</comment>
<comment type="domain">
    <text evidence="1">A Gly-cisPro motif from one monomer fits into the active site of the other monomer to allow specific chiral rejection of L-amino acids.</text>
</comment>
<comment type="similarity">
    <text evidence="1">Belongs to the DTD family.</text>
</comment>
<proteinExistence type="inferred from homology"/>
<gene>
    <name evidence="1" type="primary">dtd</name>
    <name type="ordered locus">PA5079</name>
</gene>
<keyword id="KW-0963">Cytoplasm</keyword>
<keyword id="KW-0378">Hydrolase</keyword>
<keyword id="KW-1185">Reference proteome</keyword>
<keyword id="KW-0694">RNA-binding</keyword>
<keyword id="KW-0820">tRNA-binding</keyword>
<evidence type="ECO:0000255" key="1">
    <source>
        <dbReference type="HAMAP-Rule" id="MF_00518"/>
    </source>
</evidence>
<accession>Q9HUA4</accession>
<dbReference type="EC" id="3.1.1.96" evidence="1"/>
<dbReference type="EMBL" id="AE004091">
    <property type="protein sequence ID" value="AAG08464.1"/>
    <property type="molecule type" value="Genomic_DNA"/>
</dbReference>
<dbReference type="PIR" id="A83010">
    <property type="entry name" value="A83010"/>
</dbReference>
<dbReference type="RefSeq" id="NP_253766.1">
    <property type="nucleotide sequence ID" value="NC_002516.2"/>
</dbReference>
<dbReference type="RefSeq" id="WP_003103447.1">
    <property type="nucleotide sequence ID" value="NZ_QZGE01000002.1"/>
</dbReference>
<dbReference type="SMR" id="Q9HUA4"/>
<dbReference type="FunCoup" id="Q9HUA4">
    <property type="interactions" value="567"/>
</dbReference>
<dbReference type="STRING" id="208964.PA5079"/>
<dbReference type="PaxDb" id="208964-PA5079"/>
<dbReference type="DNASU" id="880247"/>
<dbReference type="GeneID" id="880247"/>
<dbReference type="KEGG" id="pae:PA5079"/>
<dbReference type="PATRIC" id="fig|208964.12.peg.5324"/>
<dbReference type="PseudoCAP" id="PA5079"/>
<dbReference type="HOGENOM" id="CLU_076901_1_1_6"/>
<dbReference type="InParanoid" id="Q9HUA4"/>
<dbReference type="OrthoDB" id="9801395at2"/>
<dbReference type="PhylomeDB" id="Q9HUA4"/>
<dbReference type="BioCyc" id="PAER208964:G1FZ6-5195-MONOMER"/>
<dbReference type="Proteomes" id="UP000002438">
    <property type="component" value="Chromosome"/>
</dbReference>
<dbReference type="GO" id="GO:0005737">
    <property type="term" value="C:cytoplasm"/>
    <property type="evidence" value="ECO:0000318"/>
    <property type="project" value="GO_Central"/>
</dbReference>
<dbReference type="GO" id="GO:0051500">
    <property type="term" value="F:D-tyrosyl-tRNA(Tyr) deacylase activity"/>
    <property type="evidence" value="ECO:0000318"/>
    <property type="project" value="GO_Central"/>
</dbReference>
<dbReference type="GO" id="GO:0106026">
    <property type="term" value="F:Gly-tRNA(Ala) deacylase activity"/>
    <property type="evidence" value="ECO:0007669"/>
    <property type="project" value="UniProtKB-UniRule"/>
</dbReference>
<dbReference type="GO" id="GO:0043908">
    <property type="term" value="F:Ser(Gly)-tRNA(Ala) hydrolase activity"/>
    <property type="evidence" value="ECO:0007669"/>
    <property type="project" value="UniProtKB-UniRule"/>
</dbReference>
<dbReference type="GO" id="GO:0000049">
    <property type="term" value="F:tRNA binding"/>
    <property type="evidence" value="ECO:0007669"/>
    <property type="project" value="UniProtKB-UniRule"/>
</dbReference>
<dbReference type="GO" id="GO:0019478">
    <property type="term" value="P:D-amino acid catabolic process"/>
    <property type="evidence" value="ECO:0007669"/>
    <property type="project" value="UniProtKB-UniRule"/>
</dbReference>
<dbReference type="GO" id="GO:0006399">
    <property type="term" value="P:tRNA metabolic process"/>
    <property type="evidence" value="ECO:0000318"/>
    <property type="project" value="GO_Central"/>
</dbReference>
<dbReference type="CDD" id="cd00563">
    <property type="entry name" value="Dtyr_deacylase"/>
    <property type="match status" value="1"/>
</dbReference>
<dbReference type="FunFam" id="3.50.80.10:FF:000001">
    <property type="entry name" value="D-aminoacyl-tRNA deacylase"/>
    <property type="match status" value="1"/>
</dbReference>
<dbReference type="Gene3D" id="3.50.80.10">
    <property type="entry name" value="D-tyrosyl-tRNA(Tyr) deacylase"/>
    <property type="match status" value="1"/>
</dbReference>
<dbReference type="HAMAP" id="MF_00518">
    <property type="entry name" value="Deacylase_Dtd"/>
    <property type="match status" value="1"/>
</dbReference>
<dbReference type="InterPro" id="IPR003732">
    <property type="entry name" value="Daa-tRNA_deacyls_DTD"/>
</dbReference>
<dbReference type="InterPro" id="IPR023509">
    <property type="entry name" value="DTD-like_sf"/>
</dbReference>
<dbReference type="NCBIfam" id="TIGR00256">
    <property type="entry name" value="D-aminoacyl-tRNA deacylase"/>
    <property type="match status" value="1"/>
</dbReference>
<dbReference type="PANTHER" id="PTHR10472:SF5">
    <property type="entry name" value="D-AMINOACYL-TRNA DEACYLASE 1"/>
    <property type="match status" value="1"/>
</dbReference>
<dbReference type="PANTHER" id="PTHR10472">
    <property type="entry name" value="D-TYROSYL-TRNA TYR DEACYLASE"/>
    <property type="match status" value="1"/>
</dbReference>
<dbReference type="Pfam" id="PF02580">
    <property type="entry name" value="Tyr_Deacylase"/>
    <property type="match status" value="1"/>
</dbReference>
<dbReference type="SUPFAM" id="SSF69500">
    <property type="entry name" value="DTD-like"/>
    <property type="match status" value="1"/>
</dbReference>
<organism>
    <name type="scientific">Pseudomonas aeruginosa (strain ATCC 15692 / DSM 22644 / CIP 104116 / JCM 14847 / LMG 12228 / 1C / PRS 101 / PAO1)</name>
    <dbReference type="NCBI Taxonomy" id="208964"/>
    <lineage>
        <taxon>Bacteria</taxon>
        <taxon>Pseudomonadati</taxon>
        <taxon>Pseudomonadota</taxon>
        <taxon>Gammaproteobacteria</taxon>
        <taxon>Pseudomonadales</taxon>
        <taxon>Pseudomonadaceae</taxon>
        <taxon>Pseudomonas</taxon>
    </lineage>
</organism>
<protein>
    <recommendedName>
        <fullName evidence="1">D-aminoacyl-tRNA deacylase</fullName>
        <shortName evidence="1">DTD</shortName>
        <ecNumber evidence="1">3.1.1.96</ecNumber>
    </recommendedName>
    <alternativeName>
        <fullName evidence="1">Gly-tRNA(Ala) deacylase</fullName>
    </alternativeName>
</protein>